<reference key="1">
    <citation type="journal article" date="2001" name="Proc. Natl. Acad. Sci. U.S.A.">
        <title>Genome sequence of an industrial microorganism Streptomyces avermitilis: deducing the ability of producing secondary metabolites.</title>
        <authorList>
            <person name="Omura S."/>
            <person name="Ikeda H."/>
            <person name="Ishikawa J."/>
            <person name="Hanamoto A."/>
            <person name="Takahashi C."/>
            <person name="Shinose M."/>
            <person name="Takahashi Y."/>
            <person name="Horikawa H."/>
            <person name="Nakazawa H."/>
            <person name="Osonoe T."/>
            <person name="Kikuchi H."/>
            <person name="Shiba T."/>
            <person name="Sakaki Y."/>
            <person name="Hattori M."/>
        </authorList>
    </citation>
    <scope>NUCLEOTIDE SEQUENCE [LARGE SCALE GENOMIC DNA]</scope>
    <source>
        <strain>ATCC 31267 / DSM 46492 / JCM 5070 / NBRC 14893 / NCIMB 12804 / NRRL 8165 / MA-4680</strain>
    </source>
</reference>
<reference key="2">
    <citation type="journal article" date="2003" name="Nat. Biotechnol.">
        <title>Complete genome sequence and comparative analysis of the industrial microorganism Streptomyces avermitilis.</title>
        <authorList>
            <person name="Ikeda H."/>
            <person name="Ishikawa J."/>
            <person name="Hanamoto A."/>
            <person name="Shinose M."/>
            <person name="Kikuchi H."/>
            <person name="Shiba T."/>
            <person name="Sakaki Y."/>
            <person name="Hattori M."/>
            <person name="Omura S."/>
        </authorList>
    </citation>
    <scope>NUCLEOTIDE SEQUENCE [LARGE SCALE GENOMIC DNA]</scope>
    <source>
        <strain>ATCC 31267 / DSM 46492 / JCM 5070 / NBRC 14893 / NCIMB 12804 / NRRL 8165 / MA-4680</strain>
    </source>
</reference>
<organism>
    <name type="scientific">Streptomyces avermitilis (strain ATCC 31267 / DSM 46492 / JCM 5070 / NBRC 14893 / NCIMB 12804 / NRRL 8165 / MA-4680)</name>
    <dbReference type="NCBI Taxonomy" id="227882"/>
    <lineage>
        <taxon>Bacteria</taxon>
        <taxon>Bacillati</taxon>
        <taxon>Actinomycetota</taxon>
        <taxon>Actinomycetes</taxon>
        <taxon>Kitasatosporales</taxon>
        <taxon>Streptomycetaceae</taxon>
        <taxon>Streptomyces</taxon>
    </lineage>
</organism>
<evidence type="ECO:0000255" key="1">
    <source>
        <dbReference type="HAMAP-Rule" id="MF_01588"/>
    </source>
</evidence>
<evidence type="ECO:0000256" key="2">
    <source>
        <dbReference type="SAM" id="MobiDB-lite"/>
    </source>
</evidence>
<proteinExistence type="inferred from homology"/>
<feature type="chain" id="PRO_0000313473" description="DNA ligase">
    <location>
        <begin position="1"/>
        <end position="730"/>
    </location>
</feature>
<feature type="domain" description="BRCT" evidence="1">
    <location>
        <begin position="638"/>
        <end position="727"/>
    </location>
</feature>
<feature type="region of interest" description="Disordered" evidence="2">
    <location>
        <begin position="1"/>
        <end position="23"/>
    </location>
</feature>
<feature type="active site" description="N6-AMP-lysine intermediate" evidence="1">
    <location>
        <position position="126"/>
    </location>
</feature>
<feature type="binding site" evidence="1">
    <location>
        <begin position="44"/>
        <end position="48"/>
    </location>
    <ligand>
        <name>NAD(+)</name>
        <dbReference type="ChEBI" id="CHEBI:57540"/>
    </ligand>
</feature>
<feature type="binding site" evidence="1">
    <location>
        <begin position="93"/>
        <end position="94"/>
    </location>
    <ligand>
        <name>NAD(+)</name>
        <dbReference type="ChEBI" id="CHEBI:57540"/>
    </ligand>
</feature>
<feature type="binding site" evidence="1">
    <location>
        <position position="124"/>
    </location>
    <ligand>
        <name>NAD(+)</name>
        <dbReference type="ChEBI" id="CHEBI:57540"/>
    </ligand>
</feature>
<feature type="binding site" evidence="1">
    <location>
        <position position="147"/>
    </location>
    <ligand>
        <name>NAD(+)</name>
        <dbReference type="ChEBI" id="CHEBI:57540"/>
    </ligand>
</feature>
<feature type="binding site" evidence="1">
    <location>
        <position position="184"/>
    </location>
    <ligand>
        <name>NAD(+)</name>
        <dbReference type="ChEBI" id="CHEBI:57540"/>
    </ligand>
</feature>
<feature type="binding site" evidence="1">
    <location>
        <position position="300"/>
    </location>
    <ligand>
        <name>NAD(+)</name>
        <dbReference type="ChEBI" id="CHEBI:57540"/>
    </ligand>
</feature>
<feature type="binding site" evidence="1">
    <location>
        <position position="324"/>
    </location>
    <ligand>
        <name>NAD(+)</name>
        <dbReference type="ChEBI" id="CHEBI:57540"/>
    </ligand>
</feature>
<feature type="binding site" evidence="1">
    <location>
        <position position="418"/>
    </location>
    <ligand>
        <name>Zn(2+)</name>
        <dbReference type="ChEBI" id="CHEBI:29105"/>
    </ligand>
</feature>
<feature type="binding site" evidence="1">
    <location>
        <position position="421"/>
    </location>
    <ligand>
        <name>Zn(2+)</name>
        <dbReference type="ChEBI" id="CHEBI:29105"/>
    </ligand>
</feature>
<feature type="binding site" evidence="1">
    <location>
        <position position="437"/>
    </location>
    <ligand>
        <name>Zn(2+)</name>
        <dbReference type="ChEBI" id="CHEBI:29105"/>
    </ligand>
</feature>
<feature type="binding site" evidence="1">
    <location>
        <position position="443"/>
    </location>
    <ligand>
        <name>Zn(2+)</name>
        <dbReference type="ChEBI" id="CHEBI:29105"/>
    </ligand>
</feature>
<protein>
    <recommendedName>
        <fullName evidence="1">DNA ligase</fullName>
        <ecNumber evidence="1">6.5.1.2</ecNumber>
    </recommendedName>
    <alternativeName>
        <fullName evidence="1">Polydeoxyribonucleotide synthase [NAD(+)]</fullName>
    </alternativeName>
</protein>
<name>DNLJ_STRAW</name>
<sequence length="730" mass="80423">MAGEQHAQPTSVPAEAREKHAQLAEQIEEHRFRYYVKDAPVVSDAEFDTLLRSLEALEEEYPELRTPDSPTQKVAGGYETEFTAVQHRERMLSLDNAFDDLGLAAWAERVAKDVGTSDYHFLCELKVDGLAVNLTYEHGRLTRAATRGDGRTGEDITPNVRTIAEIPDRLKGDRIPDLVEIRGEVYFPMEKFEELNARLVEAGDKPFANPRNAAAGSLRQKDPRVTATRPLHMVVHGIGARQGFDIDRLSQAYELLREWGLPTTRYARVVDDLDGVREFIAYYGENRHSVEHEIDGVVVKLDEIPLQGRLGSTSRAPRWAIAWKYAPEEVNTKLINIRVGVGRTGRVTPYAQVEPVTVAGSEVEFATLHNQDVVKAKGVLIGDTVVLRKAGDVIPEILGPVVDLRDGTERAFVMPAECPECGTPLAPAKEGDVDLRCPNARTCPAQLRERLFYLAGRKSLDIEQFGYVAAAALTKPLEPAEPPLLDEGDLFDLTIERLLPIKAYVLDQDSGLPKRDPKTGEEKVATVFANQQGEPRKNAISMLDNIAAAKERPLARILTGLSIRHVGPVAAEALARAFRSIDRIDQATEEELKDTDGVGPIVAAAVKQWFAEDWHREIIRKWKAAGVRMEDERSGEDEGPRPLEGLTVVVTGTLEHHTRDGAKEALQSRGAKVTGSVSKKTSFVVVGDNPGSKYDKAMQLKVPVLNEAGFAVLLEQGPEAAAEVALPTEE</sequence>
<keyword id="KW-0227">DNA damage</keyword>
<keyword id="KW-0234">DNA repair</keyword>
<keyword id="KW-0235">DNA replication</keyword>
<keyword id="KW-0436">Ligase</keyword>
<keyword id="KW-0460">Magnesium</keyword>
<keyword id="KW-0464">Manganese</keyword>
<keyword id="KW-0479">Metal-binding</keyword>
<keyword id="KW-0520">NAD</keyword>
<keyword id="KW-1185">Reference proteome</keyword>
<keyword id="KW-0862">Zinc</keyword>
<gene>
    <name evidence="1" type="primary">ligA</name>
    <name type="ordered locus">SAV_2748</name>
</gene>
<comment type="function">
    <text evidence="1">DNA ligase that catalyzes the formation of phosphodiester linkages between 5'-phosphoryl and 3'-hydroxyl groups in double-stranded DNA using NAD as a coenzyme and as the energy source for the reaction. It is essential for DNA replication and repair of damaged DNA.</text>
</comment>
<comment type="catalytic activity">
    <reaction evidence="1">
        <text>NAD(+) + (deoxyribonucleotide)n-3'-hydroxyl + 5'-phospho-(deoxyribonucleotide)m = (deoxyribonucleotide)n+m + AMP + beta-nicotinamide D-nucleotide.</text>
        <dbReference type="EC" id="6.5.1.2"/>
    </reaction>
</comment>
<comment type="cofactor">
    <cofactor evidence="1">
        <name>Mg(2+)</name>
        <dbReference type="ChEBI" id="CHEBI:18420"/>
    </cofactor>
    <cofactor evidence="1">
        <name>Mn(2+)</name>
        <dbReference type="ChEBI" id="CHEBI:29035"/>
    </cofactor>
</comment>
<comment type="similarity">
    <text evidence="1">Belongs to the NAD-dependent DNA ligase family. LigA subfamily.</text>
</comment>
<dbReference type="EC" id="6.5.1.2" evidence="1"/>
<dbReference type="EMBL" id="BA000030">
    <property type="protein sequence ID" value="BAC70459.1"/>
    <property type="molecule type" value="Genomic_DNA"/>
</dbReference>
<dbReference type="RefSeq" id="WP_010984180.1">
    <property type="nucleotide sequence ID" value="NZ_JZJK01000071.1"/>
</dbReference>
<dbReference type="SMR" id="Q82JK7"/>
<dbReference type="GeneID" id="41539836"/>
<dbReference type="KEGG" id="sma:SAVERM_2748"/>
<dbReference type="eggNOG" id="COG0272">
    <property type="taxonomic scope" value="Bacteria"/>
</dbReference>
<dbReference type="HOGENOM" id="CLU_007764_2_1_11"/>
<dbReference type="OrthoDB" id="9759736at2"/>
<dbReference type="Proteomes" id="UP000000428">
    <property type="component" value="Chromosome"/>
</dbReference>
<dbReference type="GO" id="GO:0005829">
    <property type="term" value="C:cytosol"/>
    <property type="evidence" value="ECO:0007669"/>
    <property type="project" value="TreeGrafter"/>
</dbReference>
<dbReference type="GO" id="GO:0003911">
    <property type="term" value="F:DNA ligase (NAD+) activity"/>
    <property type="evidence" value="ECO:0007669"/>
    <property type="project" value="UniProtKB-UniRule"/>
</dbReference>
<dbReference type="GO" id="GO:0046872">
    <property type="term" value="F:metal ion binding"/>
    <property type="evidence" value="ECO:0007669"/>
    <property type="project" value="UniProtKB-KW"/>
</dbReference>
<dbReference type="GO" id="GO:0006281">
    <property type="term" value="P:DNA repair"/>
    <property type="evidence" value="ECO:0007669"/>
    <property type="project" value="UniProtKB-KW"/>
</dbReference>
<dbReference type="GO" id="GO:0006260">
    <property type="term" value="P:DNA replication"/>
    <property type="evidence" value="ECO:0007669"/>
    <property type="project" value="UniProtKB-KW"/>
</dbReference>
<dbReference type="CDD" id="cd17748">
    <property type="entry name" value="BRCT_DNA_ligase_like"/>
    <property type="match status" value="1"/>
</dbReference>
<dbReference type="CDD" id="cd00114">
    <property type="entry name" value="LIGANc"/>
    <property type="match status" value="1"/>
</dbReference>
<dbReference type="FunFam" id="1.10.150.20:FF:000006">
    <property type="entry name" value="DNA ligase"/>
    <property type="match status" value="1"/>
</dbReference>
<dbReference type="FunFam" id="1.10.287.610:FF:000002">
    <property type="entry name" value="DNA ligase"/>
    <property type="match status" value="1"/>
</dbReference>
<dbReference type="FunFam" id="2.40.50.140:FF:000012">
    <property type="entry name" value="DNA ligase"/>
    <property type="match status" value="1"/>
</dbReference>
<dbReference type="FunFam" id="3.30.470.30:FF:000001">
    <property type="entry name" value="DNA ligase"/>
    <property type="match status" value="1"/>
</dbReference>
<dbReference type="FunFam" id="3.40.50.10190:FF:000054">
    <property type="entry name" value="DNA ligase"/>
    <property type="match status" value="1"/>
</dbReference>
<dbReference type="Gene3D" id="6.20.10.30">
    <property type="match status" value="1"/>
</dbReference>
<dbReference type="Gene3D" id="1.10.150.20">
    <property type="entry name" value="5' to 3' exonuclease, C-terminal subdomain"/>
    <property type="match status" value="2"/>
</dbReference>
<dbReference type="Gene3D" id="3.40.50.10190">
    <property type="entry name" value="BRCT domain"/>
    <property type="match status" value="1"/>
</dbReference>
<dbReference type="Gene3D" id="3.30.470.30">
    <property type="entry name" value="DNA ligase/mRNA capping enzyme"/>
    <property type="match status" value="1"/>
</dbReference>
<dbReference type="Gene3D" id="1.10.287.610">
    <property type="entry name" value="Helix hairpin bin"/>
    <property type="match status" value="1"/>
</dbReference>
<dbReference type="Gene3D" id="2.40.50.140">
    <property type="entry name" value="Nucleic acid-binding proteins"/>
    <property type="match status" value="1"/>
</dbReference>
<dbReference type="HAMAP" id="MF_01588">
    <property type="entry name" value="DNA_ligase_A"/>
    <property type="match status" value="1"/>
</dbReference>
<dbReference type="InterPro" id="IPR001357">
    <property type="entry name" value="BRCT_dom"/>
</dbReference>
<dbReference type="InterPro" id="IPR036420">
    <property type="entry name" value="BRCT_dom_sf"/>
</dbReference>
<dbReference type="InterPro" id="IPR041663">
    <property type="entry name" value="DisA/LigA_HHH"/>
</dbReference>
<dbReference type="InterPro" id="IPR001679">
    <property type="entry name" value="DNA_ligase"/>
</dbReference>
<dbReference type="InterPro" id="IPR018239">
    <property type="entry name" value="DNA_ligase_AS"/>
</dbReference>
<dbReference type="InterPro" id="IPR033136">
    <property type="entry name" value="DNA_ligase_CS"/>
</dbReference>
<dbReference type="InterPro" id="IPR013839">
    <property type="entry name" value="DNAligase_adenylation"/>
</dbReference>
<dbReference type="InterPro" id="IPR013840">
    <property type="entry name" value="DNAligase_N"/>
</dbReference>
<dbReference type="InterPro" id="IPR012340">
    <property type="entry name" value="NA-bd_OB-fold"/>
</dbReference>
<dbReference type="InterPro" id="IPR004150">
    <property type="entry name" value="NAD_DNA_ligase_OB"/>
</dbReference>
<dbReference type="InterPro" id="IPR010994">
    <property type="entry name" value="RuvA_2-like"/>
</dbReference>
<dbReference type="InterPro" id="IPR004149">
    <property type="entry name" value="Znf_DNAligase_C4"/>
</dbReference>
<dbReference type="NCBIfam" id="TIGR00575">
    <property type="entry name" value="dnlj"/>
    <property type="match status" value="1"/>
</dbReference>
<dbReference type="NCBIfam" id="NF005932">
    <property type="entry name" value="PRK07956.1"/>
    <property type="match status" value="1"/>
</dbReference>
<dbReference type="PANTHER" id="PTHR23389">
    <property type="entry name" value="CHROMOSOME TRANSMISSION FIDELITY FACTOR 18"/>
    <property type="match status" value="1"/>
</dbReference>
<dbReference type="PANTHER" id="PTHR23389:SF9">
    <property type="entry name" value="DNA LIGASE"/>
    <property type="match status" value="1"/>
</dbReference>
<dbReference type="Pfam" id="PF00533">
    <property type="entry name" value="BRCT"/>
    <property type="match status" value="1"/>
</dbReference>
<dbReference type="Pfam" id="PF01653">
    <property type="entry name" value="DNA_ligase_aden"/>
    <property type="match status" value="1"/>
</dbReference>
<dbReference type="Pfam" id="PF03120">
    <property type="entry name" value="DNA_ligase_OB"/>
    <property type="match status" value="1"/>
</dbReference>
<dbReference type="Pfam" id="PF03119">
    <property type="entry name" value="DNA_ligase_ZBD"/>
    <property type="match status" value="1"/>
</dbReference>
<dbReference type="Pfam" id="PF12826">
    <property type="entry name" value="HHH_2"/>
    <property type="match status" value="1"/>
</dbReference>
<dbReference type="Pfam" id="PF22745">
    <property type="entry name" value="Nlig-Ia"/>
    <property type="match status" value="1"/>
</dbReference>
<dbReference type="PIRSF" id="PIRSF001604">
    <property type="entry name" value="LigA"/>
    <property type="match status" value="1"/>
</dbReference>
<dbReference type="SMART" id="SM00292">
    <property type="entry name" value="BRCT"/>
    <property type="match status" value="1"/>
</dbReference>
<dbReference type="SMART" id="SM00532">
    <property type="entry name" value="LIGANc"/>
    <property type="match status" value="1"/>
</dbReference>
<dbReference type="SUPFAM" id="SSF52113">
    <property type="entry name" value="BRCT domain"/>
    <property type="match status" value="1"/>
</dbReference>
<dbReference type="SUPFAM" id="SSF56091">
    <property type="entry name" value="DNA ligase/mRNA capping enzyme, catalytic domain"/>
    <property type="match status" value="1"/>
</dbReference>
<dbReference type="SUPFAM" id="SSF50249">
    <property type="entry name" value="Nucleic acid-binding proteins"/>
    <property type="match status" value="1"/>
</dbReference>
<dbReference type="SUPFAM" id="SSF47781">
    <property type="entry name" value="RuvA domain 2-like"/>
    <property type="match status" value="1"/>
</dbReference>
<dbReference type="PROSITE" id="PS50172">
    <property type="entry name" value="BRCT"/>
    <property type="match status" value="1"/>
</dbReference>
<dbReference type="PROSITE" id="PS01055">
    <property type="entry name" value="DNA_LIGASE_N1"/>
    <property type="match status" value="1"/>
</dbReference>
<dbReference type="PROSITE" id="PS01056">
    <property type="entry name" value="DNA_LIGASE_N2"/>
    <property type="match status" value="1"/>
</dbReference>
<accession>Q82JK7</accession>